<protein>
    <recommendedName>
        <fullName evidence="1">Phospho-N-acetylmuramoyl-pentapeptide-transferase</fullName>
        <ecNumber evidence="1">2.7.8.13</ecNumber>
    </recommendedName>
    <alternativeName>
        <fullName evidence="1">UDP-MurNAc-pentapeptide phosphotransferase</fullName>
    </alternativeName>
</protein>
<comment type="function">
    <text evidence="1">Catalyzes the initial step of the lipid cycle reactions in the biosynthesis of the cell wall peptidoglycan: transfers peptidoglycan precursor phospho-MurNAc-pentapeptide from UDP-MurNAc-pentapeptide onto the lipid carrier undecaprenyl phosphate, yielding undecaprenyl-pyrophosphoryl-MurNAc-pentapeptide, known as lipid I.</text>
</comment>
<comment type="catalytic activity">
    <reaction evidence="1">
        <text>UDP-N-acetyl-alpha-D-muramoyl-L-alanyl-gamma-D-glutamyl-meso-2,6-diaminopimeloyl-D-alanyl-D-alanine + di-trans,octa-cis-undecaprenyl phosphate = di-trans,octa-cis-undecaprenyl diphospho-N-acetyl-alpha-D-muramoyl-L-alanyl-D-glutamyl-meso-2,6-diaminopimeloyl-D-alanyl-D-alanine + UMP</text>
        <dbReference type="Rhea" id="RHEA:28386"/>
        <dbReference type="ChEBI" id="CHEBI:57865"/>
        <dbReference type="ChEBI" id="CHEBI:60392"/>
        <dbReference type="ChEBI" id="CHEBI:61386"/>
        <dbReference type="ChEBI" id="CHEBI:61387"/>
        <dbReference type="EC" id="2.7.8.13"/>
    </reaction>
</comment>
<comment type="cofactor">
    <cofactor evidence="1">
        <name>Mg(2+)</name>
        <dbReference type="ChEBI" id="CHEBI:18420"/>
    </cofactor>
</comment>
<comment type="pathway">
    <text evidence="1">Cell wall biogenesis; peptidoglycan biosynthesis.</text>
</comment>
<comment type="subcellular location">
    <subcellularLocation>
        <location evidence="1">Cell membrane</location>
        <topology evidence="1">Multi-pass membrane protein</topology>
    </subcellularLocation>
</comment>
<comment type="similarity">
    <text evidence="1">Belongs to the glycosyltransferase 4 family. MraY subfamily.</text>
</comment>
<comment type="sequence caution" evidence="2">
    <conflict type="erroneous initiation">
        <sequence resource="EMBL-CDS" id="AAU40631"/>
    </conflict>
</comment>
<gene>
    <name evidence="1" type="primary">mraY</name>
    <name type="ordered locus">BLi01736</name>
    <name type="ordered locus">BL02240</name>
</gene>
<proteinExistence type="inferred from homology"/>
<keyword id="KW-0131">Cell cycle</keyword>
<keyword id="KW-0132">Cell division</keyword>
<keyword id="KW-1003">Cell membrane</keyword>
<keyword id="KW-0133">Cell shape</keyword>
<keyword id="KW-0961">Cell wall biogenesis/degradation</keyword>
<keyword id="KW-0460">Magnesium</keyword>
<keyword id="KW-0472">Membrane</keyword>
<keyword id="KW-0479">Metal-binding</keyword>
<keyword id="KW-0573">Peptidoglycan synthesis</keyword>
<keyword id="KW-1185">Reference proteome</keyword>
<keyword id="KW-0808">Transferase</keyword>
<keyword id="KW-0812">Transmembrane</keyword>
<keyword id="KW-1133">Transmembrane helix</keyword>
<evidence type="ECO:0000255" key="1">
    <source>
        <dbReference type="HAMAP-Rule" id="MF_00038"/>
    </source>
</evidence>
<evidence type="ECO:0000305" key="2"/>
<dbReference type="EC" id="2.7.8.13" evidence="1"/>
<dbReference type="EMBL" id="AE017333">
    <property type="protein sequence ID" value="AAU40631.1"/>
    <property type="status" value="ALT_INIT"/>
    <property type="molecule type" value="Genomic_DNA"/>
</dbReference>
<dbReference type="EMBL" id="CP000002">
    <property type="protein sequence ID" value="AAU23274.1"/>
    <property type="molecule type" value="Genomic_DNA"/>
</dbReference>
<dbReference type="RefSeq" id="WP_003181543.1">
    <property type="nucleotide sequence ID" value="NC_006322.1"/>
</dbReference>
<dbReference type="SMR" id="Q65JY3"/>
<dbReference type="STRING" id="279010.BL02240"/>
<dbReference type="DNASU" id="3030886"/>
<dbReference type="GeneID" id="92861670"/>
<dbReference type="KEGG" id="bld:BLi01736"/>
<dbReference type="KEGG" id="bli:BL02240"/>
<dbReference type="PATRIC" id="fig|279010.13.peg.1736"/>
<dbReference type="eggNOG" id="COG0472">
    <property type="taxonomic scope" value="Bacteria"/>
</dbReference>
<dbReference type="HOGENOM" id="CLU_023982_0_1_9"/>
<dbReference type="UniPathway" id="UPA00219"/>
<dbReference type="Proteomes" id="UP000000606">
    <property type="component" value="Chromosome"/>
</dbReference>
<dbReference type="GO" id="GO:0005886">
    <property type="term" value="C:plasma membrane"/>
    <property type="evidence" value="ECO:0007669"/>
    <property type="project" value="UniProtKB-SubCell"/>
</dbReference>
<dbReference type="GO" id="GO:0046872">
    <property type="term" value="F:metal ion binding"/>
    <property type="evidence" value="ECO:0007669"/>
    <property type="project" value="UniProtKB-KW"/>
</dbReference>
<dbReference type="GO" id="GO:0008963">
    <property type="term" value="F:phospho-N-acetylmuramoyl-pentapeptide-transferase activity"/>
    <property type="evidence" value="ECO:0007669"/>
    <property type="project" value="UniProtKB-UniRule"/>
</dbReference>
<dbReference type="GO" id="GO:0051992">
    <property type="term" value="F:UDP-N-acetylmuramoyl-L-alanyl-D-glutamyl-meso-2,6-diaminopimelyl-D-alanyl-D-alanine:undecaprenyl-phosphate transferase activity"/>
    <property type="evidence" value="ECO:0007669"/>
    <property type="project" value="RHEA"/>
</dbReference>
<dbReference type="GO" id="GO:0051301">
    <property type="term" value="P:cell division"/>
    <property type="evidence" value="ECO:0007669"/>
    <property type="project" value="UniProtKB-KW"/>
</dbReference>
<dbReference type="GO" id="GO:0071555">
    <property type="term" value="P:cell wall organization"/>
    <property type="evidence" value="ECO:0007669"/>
    <property type="project" value="UniProtKB-KW"/>
</dbReference>
<dbReference type="GO" id="GO:0009252">
    <property type="term" value="P:peptidoglycan biosynthetic process"/>
    <property type="evidence" value="ECO:0007669"/>
    <property type="project" value="UniProtKB-UniRule"/>
</dbReference>
<dbReference type="GO" id="GO:0008360">
    <property type="term" value="P:regulation of cell shape"/>
    <property type="evidence" value="ECO:0007669"/>
    <property type="project" value="UniProtKB-KW"/>
</dbReference>
<dbReference type="CDD" id="cd06852">
    <property type="entry name" value="GT_MraY"/>
    <property type="match status" value="1"/>
</dbReference>
<dbReference type="HAMAP" id="MF_00038">
    <property type="entry name" value="MraY"/>
    <property type="match status" value="1"/>
</dbReference>
<dbReference type="InterPro" id="IPR000715">
    <property type="entry name" value="Glycosyl_transferase_4"/>
</dbReference>
<dbReference type="InterPro" id="IPR003524">
    <property type="entry name" value="PNAcMuramoyl-5peptid_Trfase"/>
</dbReference>
<dbReference type="InterPro" id="IPR018480">
    <property type="entry name" value="PNAcMuramoyl-5peptid_Trfase_CS"/>
</dbReference>
<dbReference type="NCBIfam" id="TIGR00445">
    <property type="entry name" value="mraY"/>
    <property type="match status" value="1"/>
</dbReference>
<dbReference type="PANTHER" id="PTHR22926">
    <property type="entry name" value="PHOSPHO-N-ACETYLMURAMOYL-PENTAPEPTIDE-TRANSFERASE"/>
    <property type="match status" value="1"/>
</dbReference>
<dbReference type="PANTHER" id="PTHR22926:SF5">
    <property type="entry name" value="PHOSPHO-N-ACETYLMURAMOYL-PENTAPEPTIDE-TRANSFERASE HOMOLOG"/>
    <property type="match status" value="1"/>
</dbReference>
<dbReference type="Pfam" id="PF00953">
    <property type="entry name" value="Glycos_transf_4"/>
    <property type="match status" value="1"/>
</dbReference>
<dbReference type="Pfam" id="PF10555">
    <property type="entry name" value="MraY_sig1"/>
    <property type="match status" value="1"/>
</dbReference>
<dbReference type="PROSITE" id="PS01347">
    <property type="entry name" value="MRAY_1"/>
    <property type="match status" value="1"/>
</dbReference>
<dbReference type="PROSITE" id="PS01348">
    <property type="entry name" value="MRAY_2"/>
    <property type="match status" value="1"/>
</dbReference>
<organism>
    <name type="scientific">Bacillus licheniformis (strain ATCC 14580 / DSM 13 / JCM 2505 / CCUG 7422 / NBRC 12200 / NCIMB 9375 / NCTC 10341 / NRRL NRS-1264 / Gibson 46)</name>
    <dbReference type="NCBI Taxonomy" id="279010"/>
    <lineage>
        <taxon>Bacteria</taxon>
        <taxon>Bacillati</taxon>
        <taxon>Bacillota</taxon>
        <taxon>Bacilli</taxon>
        <taxon>Bacillales</taxon>
        <taxon>Bacillaceae</taxon>
        <taxon>Bacillus</taxon>
    </lineage>
</organism>
<accession>Q65JY3</accession>
<accession>Q62VD4</accession>
<sequence length="324" mass="35483">MLEQVILFTIIMGFLISVLLSPIFIPFLRRLKFGQSIREEGPKSHQKKSGTPTMGGVMIILSIIATTIVMTMKFSEVSMNMILLLFVTVGYGLLGFLDDYIKVVMKRNLGLTSKQKLIGQIVIALVFYAVYHFQGMPTDIRIPGTELSFDFGWIYPVLVIFMLVGGSNAVNLTDGLDGLLSGTAAIAFGAFAILAWNQSQYDVAIFAVAVVGAVLGFLVFNAHPAKVFMGDTGSLALGGAIVTIAILTKLEILLVIIGGVFVIETLSVILQVISFKTTGKRIFKMSPLHHHYELVGWSEWRVVVTFWTAGLLLAVLGIYIEVWL</sequence>
<feature type="chain" id="PRO_0000108781" description="Phospho-N-acetylmuramoyl-pentapeptide-transferase">
    <location>
        <begin position="1"/>
        <end position="324"/>
    </location>
</feature>
<feature type="transmembrane region" description="Helical" evidence="1">
    <location>
        <begin position="5"/>
        <end position="25"/>
    </location>
</feature>
<feature type="transmembrane region" description="Helical" evidence="1">
    <location>
        <begin position="52"/>
        <end position="72"/>
    </location>
</feature>
<feature type="transmembrane region" description="Helical" evidence="1">
    <location>
        <begin position="77"/>
        <end position="97"/>
    </location>
</feature>
<feature type="transmembrane region" description="Helical" evidence="1">
    <location>
        <begin position="117"/>
        <end position="137"/>
    </location>
</feature>
<feature type="transmembrane region" description="Helical" evidence="1">
    <location>
        <begin position="147"/>
        <end position="167"/>
    </location>
</feature>
<feature type="transmembrane region" description="Helical" evidence="1">
    <location>
        <begin position="176"/>
        <end position="196"/>
    </location>
</feature>
<feature type="transmembrane region" description="Helical" evidence="1">
    <location>
        <begin position="203"/>
        <end position="223"/>
    </location>
</feature>
<feature type="transmembrane region" description="Helical" evidence="1">
    <location>
        <begin position="227"/>
        <end position="247"/>
    </location>
</feature>
<feature type="transmembrane region" description="Helical" evidence="1">
    <location>
        <begin position="250"/>
        <end position="270"/>
    </location>
</feature>
<feature type="transmembrane region" description="Helical" evidence="1">
    <location>
        <begin position="302"/>
        <end position="322"/>
    </location>
</feature>
<reference key="1">
    <citation type="journal article" date="2004" name="J. Mol. Microbiol. Biotechnol.">
        <title>The complete genome sequence of Bacillus licheniformis DSM13, an organism with great industrial potential.</title>
        <authorList>
            <person name="Veith B."/>
            <person name="Herzberg C."/>
            <person name="Steckel S."/>
            <person name="Feesche J."/>
            <person name="Maurer K.H."/>
            <person name="Ehrenreich P."/>
            <person name="Baeumer S."/>
            <person name="Henne A."/>
            <person name="Liesegang H."/>
            <person name="Merkl R."/>
            <person name="Ehrenreich A."/>
            <person name="Gottschalk G."/>
        </authorList>
    </citation>
    <scope>NUCLEOTIDE SEQUENCE [LARGE SCALE GENOMIC DNA]</scope>
    <source>
        <strain>ATCC 14580 / DSM 13 / JCM 2505 / CCUG 7422 / NBRC 12200 / NCIMB 9375 / NCTC 10341 / NRRL NRS-1264 / Gibson 46</strain>
    </source>
</reference>
<reference key="2">
    <citation type="journal article" date="2004" name="Genome Biol.">
        <title>Complete genome sequence of the industrial bacterium Bacillus licheniformis and comparisons with closely related Bacillus species.</title>
        <authorList>
            <person name="Rey M.W."/>
            <person name="Ramaiya P."/>
            <person name="Nelson B.A."/>
            <person name="Brody-Karpin S.D."/>
            <person name="Zaretsky E.J."/>
            <person name="Tang M."/>
            <person name="Lopez de Leon A."/>
            <person name="Xiang H."/>
            <person name="Gusti V."/>
            <person name="Clausen I.G."/>
            <person name="Olsen P.B."/>
            <person name="Rasmussen M.D."/>
            <person name="Andersen J.T."/>
            <person name="Joergensen P.L."/>
            <person name="Larsen T.S."/>
            <person name="Sorokin A."/>
            <person name="Bolotin A."/>
            <person name="Lapidus A."/>
            <person name="Galleron N."/>
            <person name="Ehrlich S.D."/>
            <person name="Berka R.M."/>
        </authorList>
    </citation>
    <scope>NUCLEOTIDE SEQUENCE [LARGE SCALE GENOMIC DNA]</scope>
    <source>
        <strain>ATCC 14580 / DSM 13 / JCM 2505 / CCUG 7422 / NBRC 12200 / NCIMB 9375 / NCTC 10341 / NRRL NRS-1264 / Gibson 46</strain>
    </source>
</reference>
<name>MRAY_BACLD</name>